<accession>Q54HL6</accession>
<accession>Q2PQ77</accession>
<feature type="chain" id="PRO_0000327771" description="COP9 signalosome complex subunit 2">
    <location>
        <begin position="1"/>
        <end position="449"/>
    </location>
</feature>
<feature type="domain" description="PCI" evidence="2">
    <location>
        <begin position="251"/>
        <end position="420"/>
    </location>
</feature>
<feature type="region of interest" description="Disordered" evidence="3">
    <location>
        <begin position="1"/>
        <end position="32"/>
    </location>
</feature>
<dbReference type="EMBL" id="DQ309430">
    <property type="protein sequence ID" value="ABC46694.1"/>
    <property type="molecule type" value="mRNA"/>
</dbReference>
<dbReference type="EMBL" id="AAFI02000139">
    <property type="protein sequence ID" value="EAL62767.1"/>
    <property type="molecule type" value="Genomic_DNA"/>
</dbReference>
<dbReference type="RefSeq" id="XP_636285.1">
    <property type="nucleotide sequence ID" value="XM_631193.1"/>
</dbReference>
<dbReference type="SMR" id="Q54HL6"/>
<dbReference type="FunCoup" id="Q54HL6">
    <property type="interactions" value="1150"/>
</dbReference>
<dbReference type="STRING" id="44689.Q54HL6"/>
<dbReference type="PaxDb" id="44689-DDB0233100"/>
<dbReference type="EnsemblProtists" id="EAL62767">
    <property type="protein sequence ID" value="EAL62767"/>
    <property type="gene ID" value="DDB_G0289361"/>
</dbReference>
<dbReference type="GeneID" id="8627103"/>
<dbReference type="KEGG" id="ddi:DDB_G0289361"/>
<dbReference type="dictyBase" id="DDB_G0289361">
    <property type="gene designation" value="csn2"/>
</dbReference>
<dbReference type="VEuPathDB" id="AmoebaDB:DDB_G0289361"/>
<dbReference type="eggNOG" id="KOG1464">
    <property type="taxonomic scope" value="Eukaryota"/>
</dbReference>
<dbReference type="HOGENOM" id="CLU_028981_0_1_1"/>
<dbReference type="InParanoid" id="Q54HL6"/>
<dbReference type="OMA" id="SEENWKD"/>
<dbReference type="PhylomeDB" id="Q54HL6"/>
<dbReference type="Reactome" id="R-DDI-5696394">
    <property type="pathway name" value="DNA Damage Recognition in GG-NER"/>
</dbReference>
<dbReference type="Reactome" id="R-DDI-6781823">
    <property type="pathway name" value="Formation of TC-NER Pre-Incision Complex"/>
</dbReference>
<dbReference type="Reactome" id="R-DDI-8856825">
    <property type="pathway name" value="Cargo recognition for clathrin-mediated endocytosis"/>
</dbReference>
<dbReference type="Reactome" id="R-DDI-8951664">
    <property type="pathway name" value="Neddylation"/>
</dbReference>
<dbReference type="Reactome" id="R-DDI-9013422">
    <property type="pathway name" value="RHOBTB1 GTPase cycle"/>
</dbReference>
<dbReference type="PRO" id="PR:Q54HL6"/>
<dbReference type="Proteomes" id="UP000002195">
    <property type="component" value="Chromosome 5"/>
</dbReference>
<dbReference type="GO" id="GO:0008180">
    <property type="term" value="C:COP9 signalosome"/>
    <property type="evidence" value="ECO:0000353"/>
    <property type="project" value="dictyBase"/>
</dbReference>
<dbReference type="GO" id="GO:0005737">
    <property type="term" value="C:cytoplasm"/>
    <property type="evidence" value="ECO:0007669"/>
    <property type="project" value="UniProtKB-SubCell"/>
</dbReference>
<dbReference type="GO" id="GO:0000338">
    <property type="term" value="P:protein deneddylation"/>
    <property type="evidence" value="ECO:0000318"/>
    <property type="project" value="GO_Central"/>
</dbReference>
<dbReference type="FunFam" id="1.25.40.570:FF:000011">
    <property type="entry name" value="COP9 signalosome complex subunit 2"/>
    <property type="match status" value="1"/>
</dbReference>
<dbReference type="Gene3D" id="1.25.40.570">
    <property type="match status" value="1"/>
</dbReference>
<dbReference type="InterPro" id="IPR050871">
    <property type="entry name" value="26S_Proteasome/COP9_Components"/>
</dbReference>
<dbReference type="InterPro" id="IPR000717">
    <property type="entry name" value="PCI_dom"/>
</dbReference>
<dbReference type="InterPro" id="IPR036390">
    <property type="entry name" value="WH_DNA-bd_sf"/>
</dbReference>
<dbReference type="PANTHER" id="PTHR10678">
    <property type="entry name" value="26S PROTEASOME NON-ATPASE REGULATORY SUBUNIT 11/COP9 SIGNALOSOME COMPLEX SUBUNIT 2"/>
    <property type="match status" value="1"/>
</dbReference>
<dbReference type="Pfam" id="PF01399">
    <property type="entry name" value="PCI"/>
    <property type="match status" value="1"/>
</dbReference>
<dbReference type="SMART" id="SM00753">
    <property type="entry name" value="PAM"/>
    <property type="match status" value="1"/>
</dbReference>
<dbReference type="SMART" id="SM00088">
    <property type="entry name" value="PINT"/>
    <property type="match status" value="1"/>
</dbReference>
<dbReference type="SUPFAM" id="SSF46785">
    <property type="entry name" value="Winged helix' DNA-binding domain"/>
    <property type="match status" value="1"/>
</dbReference>
<dbReference type="PROSITE" id="PS50250">
    <property type="entry name" value="PCI"/>
    <property type="match status" value="1"/>
</dbReference>
<sequence>MSDDEDMMYDDDEYFDDDEDQDQNDSESEGVEIENQYYNSKGLIDESIPDAIKSYEKVVDLENGEKGEWGFKALKKITKLYFRIGDFDNMLESFKKFLPYTKSSASSNYIEKGINSVLDMVSSSNTIELDMIQKVFDLTLKSLLDTKNERVWFRTNLKLAKLLFEKAEYGRLAKILRDLHKSCELEDGTDDQKKGSQLVDIYALEIQMYTETKNNKKLKDLYKKALEIKSAIPHPRIMGIIRECGGKMHMAEKEWEKAHTDFFEAFKNYDEAGNSRRIQCLKYLVLACMLMLSTINPFDSTEAKPYKNDPDILAMTNLVMAYEKNDIYAFEKILKDNRKTIMDDPFIRMYIEDLLRNIRTQVLLKLLKPYTRIRISFISKELNIPSSDVESLLVSLILDNKIRGSIDQVNQQLELDTAKSSAYWKYTSIHKWANQIGQLNGGINNKLVS</sequence>
<reference key="1">
    <citation type="journal article" date="2006" name="Eur. J. Cell Biol.">
        <title>The COP9 signalosome regulates cell proliferation of Dictyostelium discoideum.</title>
        <authorList>
            <person name="Rosel D."/>
            <person name="Kimmel A.R."/>
        </authorList>
    </citation>
    <scope>NUCLEOTIDE SEQUENCE [MRNA]</scope>
    <scope>IDENTIFICATION IN THE CSN COMPLEX</scope>
</reference>
<reference key="2">
    <citation type="journal article" date="2005" name="Nature">
        <title>The genome of the social amoeba Dictyostelium discoideum.</title>
        <authorList>
            <person name="Eichinger L."/>
            <person name="Pachebat J.A."/>
            <person name="Gloeckner G."/>
            <person name="Rajandream M.A."/>
            <person name="Sucgang R."/>
            <person name="Berriman M."/>
            <person name="Song J."/>
            <person name="Olsen R."/>
            <person name="Szafranski K."/>
            <person name="Xu Q."/>
            <person name="Tunggal B."/>
            <person name="Kummerfeld S."/>
            <person name="Madera M."/>
            <person name="Konfortov B.A."/>
            <person name="Rivero F."/>
            <person name="Bankier A.T."/>
            <person name="Lehmann R."/>
            <person name="Hamlin N."/>
            <person name="Davies R."/>
            <person name="Gaudet P."/>
            <person name="Fey P."/>
            <person name="Pilcher K."/>
            <person name="Chen G."/>
            <person name="Saunders D."/>
            <person name="Sodergren E.J."/>
            <person name="Davis P."/>
            <person name="Kerhornou A."/>
            <person name="Nie X."/>
            <person name="Hall N."/>
            <person name="Anjard C."/>
            <person name="Hemphill L."/>
            <person name="Bason N."/>
            <person name="Farbrother P."/>
            <person name="Desany B."/>
            <person name="Just E."/>
            <person name="Morio T."/>
            <person name="Rost R."/>
            <person name="Churcher C.M."/>
            <person name="Cooper J."/>
            <person name="Haydock S."/>
            <person name="van Driessche N."/>
            <person name="Cronin A."/>
            <person name="Goodhead I."/>
            <person name="Muzny D.M."/>
            <person name="Mourier T."/>
            <person name="Pain A."/>
            <person name="Lu M."/>
            <person name="Harper D."/>
            <person name="Lindsay R."/>
            <person name="Hauser H."/>
            <person name="James K.D."/>
            <person name="Quiles M."/>
            <person name="Madan Babu M."/>
            <person name="Saito T."/>
            <person name="Buchrieser C."/>
            <person name="Wardroper A."/>
            <person name="Felder M."/>
            <person name="Thangavelu M."/>
            <person name="Johnson D."/>
            <person name="Knights A."/>
            <person name="Loulseged H."/>
            <person name="Mungall K.L."/>
            <person name="Oliver K."/>
            <person name="Price C."/>
            <person name="Quail M.A."/>
            <person name="Urushihara H."/>
            <person name="Hernandez J."/>
            <person name="Rabbinowitsch E."/>
            <person name="Steffen D."/>
            <person name="Sanders M."/>
            <person name="Ma J."/>
            <person name="Kohara Y."/>
            <person name="Sharp S."/>
            <person name="Simmonds M.N."/>
            <person name="Spiegler S."/>
            <person name="Tivey A."/>
            <person name="Sugano S."/>
            <person name="White B."/>
            <person name="Walker D."/>
            <person name="Woodward J.R."/>
            <person name="Winckler T."/>
            <person name="Tanaka Y."/>
            <person name="Shaulsky G."/>
            <person name="Schleicher M."/>
            <person name="Weinstock G.M."/>
            <person name="Rosenthal A."/>
            <person name="Cox E.C."/>
            <person name="Chisholm R.L."/>
            <person name="Gibbs R.A."/>
            <person name="Loomis W.F."/>
            <person name="Platzer M."/>
            <person name="Kay R.R."/>
            <person name="Williams J.G."/>
            <person name="Dear P.H."/>
            <person name="Noegel A.A."/>
            <person name="Barrell B.G."/>
            <person name="Kuspa A."/>
        </authorList>
    </citation>
    <scope>NUCLEOTIDE SEQUENCE [LARGE SCALE GENOMIC DNA]</scope>
    <source>
        <strain>AX4</strain>
    </source>
</reference>
<evidence type="ECO:0000250" key="1"/>
<evidence type="ECO:0000255" key="2">
    <source>
        <dbReference type="PROSITE-ProRule" id="PRU01185"/>
    </source>
</evidence>
<evidence type="ECO:0000256" key="3">
    <source>
        <dbReference type="SAM" id="MobiDB-lite"/>
    </source>
</evidence>
<evidence type="ECO:0000269" key="4">
    <source>
    </source>
</evidence>
<evidence type="ECO:0000305" key="5"/>
<proteinExistence type="evidence at protein level"/>
<name>CSN2_DICDI</name>
<comment type="function">
    <text>Essential component of the COP9 signalosome complex (CSN), a complex involved in various cellular and developmental processes. The CSN complex is an essential regulator of the ubiquitin (Ubl) conjugation pathway by mediating the deneddylation of the cullin subunits of E3 ligase complexes, leading to modify the Ubl ligase activity.</text>
</comment>
<comment type="subunit">
    <text evidence="4">Component of the CSN complex. The holocomplex is comprised of 8 subunits csn1-8. In the complex, it probably interacts directly with csn1, csn3, csn5, csn6, csn7 and csn8.</text>
</comment>
<comment type="subcellular location">
    <subcellularLocation>
        <location evidence="1">Cytoplasm</location>
    </subcellularLocation>
    <subcellularLocation>
        <location evidence="1">Nucleus</location>
    </subcellularLocation>
</comment>
<comment type="similarity">
    <text evidence="5">Belongs to the CSN2 family.</text>
</comment>
<gene>
    <name type="primary">csn2</name>
    <name type="ORF">DDB_G0289361</name>
</gene>
<keyword id="KW-0963">Cytoplasm</keyword>
<keyword id="KW-0539">Nucleus</keyword>
<keyword id="KW-1185">Reference proteome</keyword>
<keyword id="KW-0736">Signalosome</keyword>
<organism>
    <name type="scientific">Dictyostelium discoideum</name>
    <name type="common">Social amoeba</name>
    <dbReference type="NCBI Taxonomy" id="44689"/>
    <lineage>
        <taxon>Eukaryota</taxon>
        <taxon>Amoebozoa</taxon>
        <taxon>Evosea</taxon>
        <taxon>Eumycetozoa</taxon>
        <taxon>Dictyostelia</taxon>
        <taxon>Dictyosteliales</taxon>
        <taxon>Dictyosteliaceae</taxon>
        <taxon>Dictyostelium</taxon>
    </lineage>
</organism>
<protein>
    <recommendedName>
        <fullName>COP9 signalosome complex subunit 2</fullName>
        <shortName>Signalosome subunit 2</shortName>
    </recommendedName>
</protein>